<reference key="1">
    <citation type="journal article" date="1994" name="Endocrinology">
        <title>Molecular cloning of an ovine ovarian tissue inhibitor of metalloproteinases: ontogeny of messenger ribonucleic acid expression and in situ localization within preovulatory follicles and luteal tissue.</title>
        <authorList>
            <person name="Smith G.W."/>
            <person name="Goetz T.L."/>
            <person name="Anthony R.V."/>
            <person name="Smith M.F."/>
        </authorList>
    </citation>
    <scope>NUCLEOTIDE SEQUENCE [MRNA]</scope>
    <source>
        <tissue>Corpus luteum</tissue>
    </source>
</reference>
<dbReference type="EMBL" id="S67450">
    <property type="protein sequence ID" value="AAB29472.1"/>
    <property type="molecule type" value="mRNA"/>
</dbReference>
<dbReference type="PIR" id="I46964">
    <property type="entry name" value="I46964"/>
</dbReference>
<dbReference type="RefSeq" id="NP_001009319.1">
    <property type="nucleotide sequence ID" value="NM_001009319.2"/>
</dbReference>
<dbReference type="SMR" id="P50122"/>
<dbReference type="STRING" id="9940.ENSOARP00000014098"/>
<dbReference type="GlyCosmos" id="P50122">
    <property type="glycosylation" value="2 sites, No reported glycans"/>
</dbReference>
<dbReference type="PaxDb" id="9940-ENSOARP00000014098"/>
<dbReference type="GeneID" id="443331"/>
<dbReference type="KEGG" id="oas:443331"/>
<dbReference type="CTD" id="7076"/>
<dbReference type="eggNOG" id="KOG4745">
    <property type="taxonomic scope" value="Eukaryota"/>
</dbReference>
<dbReference type="OrthoDB" id="6041373at2759"/>
<dbReference type="Proteomes" id="UP000002356">
    <property type="component" value="Unplaced"/>
</dbReference>
<dbReference type="GO" id="GO:0005604">
    <property type="term" value="C:basement membrane"/>
    <property type="evidence" value="ECO:0007669"/>
    <property type="project" value="Ensembl"/>
</dbReference>
<dbReference type="GO" id="GO:0005615">
    <property type="term" value="C:extracellular space"/>
    <property type="evidence" value="ECO:0000250"/>
    <property type="project" value="UniProtKB"/>
</dbReference>
<dbReference type="GO" id="GO:0005125">
    <property type="term" value="F:cytokine activity"/>
    <property type="evidence" value="ECO:0000250"/>
    <property type="project" value="UniProtKB"/>
</dbReference>
<dbReference type="GO" id="GO:0008083">
    <property type="term" value="F:growth factor activity"/>
    <property type="evidence" value="ECO:0007669"/>
    <property type="project" value="UniProtKB-KW"/>
</dbReference>
<dbReference type="GO" id="GO:0008191">
    <property type="term" value="F:metalloendopeptidase inhibitor activity"/>
    <property type="evidence" value="ECO:0000250"/>
    <property type="project" value="UniProtKB"/>
</dbReference>
<dbReference type="GO" id="GO:0002020">
    <property type="term" value="F:protease binding"/>
    <property type="evidence" value="ECO:0007669"/>
    <property type="project" value="TreeGrafter"/>
</dbReference>
<dbReference type="GO" id="GO:0008270">
    <property type="term" value="F:zinc ion binding"/>
    <property type="evidence" value="ECO:0007669"/>
    <property type="project" value="Ensembl"/>
</dbReference>
<dbReference type="GO" id="GO:0071492">
    <property type="term" value="P:cellular response to UV-A"/>
    <property type="evidence" value="ECO:0000250"/>
    <property type="project" value="UniProtKB"/>
</dbReference>
<dbReference type="GO" id="GO:0002248">
    <property type="term" value="P:connective tissue replacement involved in inflammatory response wound healing"/>
    <property type="evidence" value="ECO:0007669"/>
    <property type="project" value="Ensembl"/>
</dbReference>
<dbReference type="GO" id="GO:0043086">
    <property type="term" value="P:negative regulation of catalytic activity"/>
    <property type="evidence" value="ECO:0000250"/>
    <property type="project" value="UniProtKB"/>
</dbReference>
<dbReference type="GO" id="GO:0010951">
    <property type="term" value="P:negative regulation of endopeptidase activity"/>
    <property type="evidence" value="ECO:0000250"/>
    <property type="project" value="UniProtKB"/>
</dbReference>
<dbReference type="GO" id="GO:0051045">
    <property type="term" value="P:negative regulation of membrane protein ectodomain proteolysis"/>
    <property type="evidence" value="ECO:0007669"/>
    <property type="project" value="Ensembl"/>
</dbReference>
<dbReference type="GO" id="GO:1901164">
    <property type="term" value="P:negative regulation of trophoblast cell migration"/>
    <property type="evidence" value="ECO:0007669"/>
    <property type="project" value="Ensembl"/>
</dbReference>
<dbReference type="GO" id="GO:0008284">
    <property type="term" value="P:positive regulation of cell population proliferation"/>
    <property type="evidence" value="ECO:0000250"/>
    <property type="project" value="UniProtKB"/>
</dbReference>
<dbReference type="GO" id="GO:2001044">
    <property type="term" value="P:regulation of integrin-mediated signaling pathway"/>
    <property type="evidence" value="ECO:0000250"/>
    <property type="project" value="UniProtKB"/>
</dbReference>
<dbReference type="GO" id="GO:0034097">
    <property type="term" value="P:response to cytokine"/>
    <property type="evidence" value="ECO:0007669"/>
    <property type="project" value="TreeGrafter"/>
</dbReference>
<dbReference type="GO" id="GO:0009725">
    <property type="term" value="P:response to hormone"/>
    <property type="evidence" value="ECO:0007669"/>
    <property type="project" value="TreeGrafter"/>
</dbReference>
<dbReference type="FunFam" id="2.40.50.120:FF:000016">
    <property type="entry name" value="Metalloproteinase inhibitor 1"/>
    <property type="match status" value="1"/>
</dbReference>
<dbReference type="FunFam" id="3.90.370.10:FF:000001">
    <property type="entry name" value="Metalloproteinase inhibitor 3"/>
    <property type="match status" value="1"/>
</dbReference>
<dbReference type="Gene3D" id="2.40.50.120">
    <property type="match status" value="1"/>
</dbReference>
<dbReference type="Gene3D" id="3.90.370.10">
    <property type="entry name" value="Tissue inhibitor of metalloproteinase-1. Chain B, domain 1"/>
    <property type="match status" value="1"/>
</dbReference>
<dbReference type="InterPro" id="IPR001134">
    <property type="entry name" value="Netrin_domain"/>
</dbReference>
<dbReference type="InterPro" id="IPR001820">
    <property type="entry name" value="TIMP"/>
</dbReference>
<dbReference type="InterPro" id="IPR008993">
    <property type="entry name" value="TIMP-like_OB-fold"/>
</dbReference>
<dbReference type="InterPro" id="IPR027465">
    <property type="entry name" value="TIMP_C"/>
</dbReference>
<dbReference type="InterPro" id="IPR030490">
    <property type="entry name" value="TIMP_CS"/>
</dbReference>
<dbReference type="PANTHER" id="PTHR11844">
    <property type="entry name" value="METALLOPROTEASE INHIBITOR"/>
    <property type="match status" value="1"/>
</dbReference>
<dbReference type="PANTHER" id="PTHR11844:SF20">
    <property type="entry name" value="METALLOPROTEINASE INHIBITOR 1"/>
    <property type="match status" value="1"/>
</dbReference>
<dbReference type="Pfam" id="PF00965">
    <property type="entry name" value="TIMP"/>
    <property type="match status" value="1"/>
</dbReference>
<dbReference type="SMART" id="SM00206">
    <property type="entry name" value="NTR"/>
    <property type="match status" value="1"/>
</dbReference>
<dbReference type="SUPFAM" id="SSF50242">
    <property type="entry name" value="TIMP-like"/>
    <property type="match status" value="1"/>
</dbReference>
<dbReference type="PROSITE" id="PS50189">
    <property type="entry name" value="NTR"/>
    <property type="match status" value="1"/>
</dbReference>
<dbReference type="PROSITE" id="PS00288">
    <property type="entry name" value="TIMP"/>
    <property type="match status" value="1"/>
</dbReference>
<gene>
    <name type="primary">TIMP1</name>
</gene>
<proteinExistence type="evidence at transcript level"/>
<organism>
    <name type="scientific">Ovis aries</name>
    <name type="common">Sheep</name>
    <dbReference type="NCBI Taxonomy" id="9940"/>
    <lineage>
        <taxon>Eukaryota</taxon>
        <taxon>Metazoa</taxon>
        <taxon>Chordata</taxon>
        <taxon>Craniata</taxon>
        <taxon>Vertebrata</taxon>
        <taxon>Euteleostomi</taxon>
        <taxon>Mammalia</taxon>
        <taxon>Eutheria</taxon>
        <taxon>Laurasiatheria</taxon>
        <taxon>Artiodactyla</taxon>
        <taxon>Ruminantia</taxon>
        <taxon>Pecora</taxon>
        <taxon>Bovidae</taxon>
        <taxon>Caprinae</taxon>
        <taxon>Ovis</taxon>
    </lineage>
</organism>
<comment type="function">
    <text evidence="1">Metalloproteinase inhibitor that functions by forming one to one complexes with target metalloproteinases, such as collagenases, and irreversibly inactivates them by binding to their catalytic zinc cofactor. Acts on MMP1, MMP2, MMP3, MMP7, MMP8, MMP9, MMP10, MMP11, MMP12, MMP13 and MMP16. Does not act on MMP14. Also functions as a growth factor that regulates cell differentiation, migration and cell death and activates cellular signaling cascades via CD63 and ITGB1. Plays a role in integrin signaling (By similarity).</text>
</comment>
<comment type="subunit">
    <text evidence="1">Interacts with MMP1, MMP3, MMP10 and MMP13, but has only very low affinity for MMP14. Interacts with CD63; identified in a complex with CD63 and ITGB1 (By similarity).</text>
</comment>
<comment type="subcellular location">
    <subcellularLocation>
        <location evidence="1">Secreted</location>
    </subcellularLocation>
</comment>
<comment type="PTM">
    <text evidence="1">The activity of TIMP1 is dependent on the presence of disulfide bonds.</text>
</comment>
<comment type="PTM">
    <text evidence="1">N-glycosylated.</text>
</comment>
<comment type="similarity">
    <text evidence="6">Belongs to the protease inhibitor I35 (TIMP) family.</text>
</comment>
<protein>
    <recommendedName>
        <fullName>Metalloproteinase inhibitor 1</fullName>
    </recommendedName>
    <alternativeName>
        <fullName>Tissue inhibitor of metalloproteinases 1</fullName>
        <shortName>TIMP-1</shortName>
    </alternativeName>
</protein>
<feature type="signal peptide" evidence="1">
    <location>
        <begin position="1"/>
        <end position="23"/>
    </location>
</feature>
<feature type="chain" id="PRO_0000034330" description="Metalloproteinase inhibitor 1">
    <location>
        <begin position="24"/>
        <end position="207"/>
    </location>
</feature>
<feature type="domain" description="NTR" evidence="5">
    <location>
        <begin position="24"/>
        <end position="147"/>
    </location>
</feature>
<feature type="region of interest" description="Involved in metalloproteinase-binding" evidence="3">
    <location>
        <begin position="24"/>
        <end position="27"/>
    </location>
</feature>
<feature type="region of interest" description="Involved in metalloproteinase-binding" evidence="3">
    <location>
        <begin position="90"/>
        <end position="91"/>
    </location>
</feature>
<feature type="binding site" evidence="3">
    <location>
        <position position="24"/>
    </location>
    <ligand>
        <name>Zn(2+)</name>
        <dbReference type="ChEBI" id="CHEBI:29105"/>
        <note>ligand shared with metalloproteinase partner</note>
    </ligand>
</feature>
<feature type="site" description="Involved in metalloproteinase-binding" evidence="3">
    <location>
        <position position="37"/>
    </location>
</feature>
<feature type="modified residue" description="Phosphoserine" evidence="2">
    <location>
        <position position="178"/>
    </location>
</feature>
<feature type="glycosylation site" description="N-linked (GlcNAc...) asparagine" evidence="4">
    <location>
        <position position="53"/>
    </location>
</feature>
<feature type="glycosylation site" description="N-linked (GlcNAc...) asparagine" evidence="4">
    <location>
        <position position="101"/>
    </location>
</feature>
<feature type="disulfide bond" evidence="5">
    <location>
        <begin position="24"/>
        <end position="93"/>
    </location>
</feature>
<feature type="disulfide bond" evidence="5">
    <location>
        <begin position="26"/>
        <end position="122"/>
    </location>
</feature>
<feature type="disulfide bond" evidence="5">
    <location>
        <begin position="36"/>
        <end position="147"/>
    </location>
</feature>
<feature type="disulfide bond" evidence="5">
    <location>
        <begin position="150"/>
        <end position="197"/>
    </location>
</feature>
<feature type="disulfide bond" evidence="5">
    <location>
        <begin position="155"/>
        <end position="160"/>
    </location>
</feature>
<feature type="disulfide bond" evidence="5">
    <location>
        <begin position="168"/>
        <end position="189"/>
    </location>
</feature>
<evidence type="ECO:0000250" key="1"/>
<evidence type="ECO:0000250" key="2">
    <source>
        <dbReference type="UniProtKB" id="P01033"/>
    </source>
</evidence>
<evidence type="ECO:0000250" key="3">
    <source>
        <dbReference type="UniProtKB" id="P16035"/>
    </source>
</evidence>
<evidence type="ECO:0000255" key="4"/>
<evidence type="ECO:0000255" key="5">
    <source>
        <dbReference type="PROSITE-ProRule" id="PRU00295"/>
    </source>
</evidence>
<evidence type="ECO:0000305" key="6"/>
<name>TIMP1_SHEEP</name>
<sequence length="207" mass="23058">MALFAPTVSGILLLLWLTAPSRACTCVPPHPQTAFCNSEVVIRAKFVGTAEVNETALYQRYEIKMTKMFKGFSALRDAPDIRFIYTPAMESVCGYFHRSQNRSEEFLIAGQLSNGHLHITTCSFVAPWNSMSSAQRRGFTKTYAAGCEECTVFPCSSIPCKLQSDTHCLWTDQLLTGSDKGFQSRHLACLPREPGMCTWQSLRPRGA</sequence>
<keyword id="KW-1015">Disulfide bond</keyword>
<keyword id="KW-0325">Glycoprotein</keyword>
<keyword id="KW-0339">Growth factor</keyword>
<keyword id="KW-0479">Metal-binding</keyword>
<keyword id="KW-0481">Metalloenzyme inhibitor</keyword>
<keyword id="KW-0483">Metalloprotease inhibitor</keyword>
<keyword id="KW-0597">Phosphoprotein</keyword>
<keyword id="KW-0646">Protease inhibitor</keyword>
<keyword id="KW-1185">Reference proteome</keyword>
<keyword id="KW-0964">Secreted</keyword>
<keyword id="KW-0732">Signal</keyword>
<keyword id="KW-0862">Zinc</keyword>
<accession>P50122</accession>